<sequence>MTKRISAEEKLNRKPISRACVFCHEKHLQCDVGRPCQNCEKRNIGESCRDNVRKVRKTRGRTPRSGVMNLRRARREHEDELAIATKSRGAGEPGSTGLPQVPSLSTLFDANVDPVIDEELLPATYVDPLGPSDVELPTSGAESFGSVWASSEYTKLNEILGSPGIERPRKHVPSKYEPFAVPATAEHSPSPSTPIELLQDHAGLLFRNTLRRHISLDTAQSSYQASTQDTQASTVASSVSCEGAQFPASEAEYTSPYSFRQLVRSPEDLYRHQNSIFPHNYRQAYLELLNILRARFLSAQDEIAREEGPKQLHSIAQSIKTYYAPIFVTLTSNLIESDLKMHELILQRTLLEYENMSKMVNCIPMCIWRRSGEICYVSNEFISLTGFSRRELLMRRRFIMEFFDNHGIVDYFKLFNEYLAFSSKEGFSSTSDGQAVFSECNLLMANNSFLKCACIWTVKRDSFNIPMLVMGQFLPIFDMDHT</sequence>
<evidence type="ECO:0000250" key="1"/>
<evidence type="ECO:0000255" key="2">
    <source>
        <dbReference type="PROSITE-ProRule" id="PRU00140"/>
    </source>
</evidence>
<evidence type="ECO:0000255" key="3">
    <source>
        <dbReference type="PROSITE-ProRule" id="PRU00227"/>
    </source>
</evidence>
<evidence type="ECO:0000305" key="4"/>
<accession>Q754J3</accession>
<organism>
    <name type="scientific">Eremothecium gossypii (strain ATCC 10895 / CBS 109.51 / FGSC 9923 / NRRL Y-1056)</name>
    <name type="common">Yeast</name>
    <name type="synonym">Ashbya gossypii</name>
    <dbReference type="NCBI Taxonomy" id="284811"/>
    <lineage>
        <taxon>Eukaryota</taxon>
        <taxon>Fungi</taxon>
        <taxon>Dikarya</taxon>
        <taxon>Ascomycota</taxon>
        <taxon>Saccharomycotina</taxon>
        <taxon>Saccharomycetes</taxon>
        <taxon>Saccharomycetales</taxon>
        <taxon>Saccharomycetaceae</taxon>
        <taxon>Eremothecium</taxon>
    </lineage>
</organism>
<feature type="chain" id="PRO_0000406478" description="Glucose starvation modulator protein 1">
    <location>
        <begin position="1"/>
        <end position="482"/>
    </location>
</feature>
<feature type="domain" description="PAS" evidence="2">
    <location>
        <begin position="350"/>
        <end position="422"/>
    </location>
</feature>
<feature type="DNA-binding region" description="Zn(2)-C6 fungal-type" evidence="3">
    <location>
        <begin position="20"/>
        <end position="48"/>
    </location>
</feature>
<comment type="function">
    <text evidence="1">Transcription factor which regulates nonfermentable carbon utilization.</text>
</comment>
<comment type="subcellular location">
    <subcellularLocation>
        <location evidence="3">Nucleus</location>
    </subcellularLocation>
</comment>
<comment type="similarity">
    <text evidence="4">Belongs to the ERT1/acuK family.</text>
</comment>
<gene>
    <name type="primary">GSM1</name>
    <name type="ordered locus">AFR081C</name>
</gene>
<name>GSM1_EREGS</name>
<dbReference type="EMBL" id="AE016819">
    <property type="protein sequence ID" value="AAS53452.1"/>
    <property type="molecule type" value="Genomic_DNA"/>
</dbReference>
<dbReference type="RefSeq" id="NP_985628.1">
    <property type="nucleotide sequence ID" value="NM_210982.2"/>
</dbReference>
<dbReference type="FunCoup" id="Q754J3">
    <property type="interactions" value="168"/>
</dbReference>
<dbReference type="EnsemblFungi" id="AAS53452">
    <property type="protein sequence ID" value="AAS53452"/>
    <property type="gene ID" value="AGOS_AFR081C"/>
</dbReference>
<dbReference type="GeneID" id="4621871"/>
<dbReference type="KEGG" id="ago:AGOS_AFR081C"/>
<dbReference type="eggNOG" id="ENOG502R2ZP">
    <property type="taxonomic scope" value="Eukaryota"/>
</dbReference>
<dbReference type="HOGENOM" id="CLU_010748_2_2_1"/>
<dbReference type="InParanoid" id="Q754J3"/>
<dbReference type="OMA" id="FCHEKHL"/>
<dbReference type="OrthoDB" id="2538135at2759"/>
<dbReference type="Proteomes" id="UP000000591">
    <property type="component" value="Chromosome VI"/>
</dbReference>
<dbReference type="GO" id="GO:0005634">
    <property type="term" value="C:nucleus"/>
    <property type="evidence" value="ECO:0000318"/>
    <property type="project" value="GO_Central"/>
</dbReference>
<dbReference type="GO" id="GO:0003700">
    <property type="term" value="F:DNA-binding transcription factor activity"/>
    <property type="evidence" value="ECO:0000318"/>
    <property type="project" value="GO_Central"/>
</dbReference>
<dbReference type="GO" id="GO:0000981">
    <property type="term" value="F:DNA-binding transcription factor activity, RNA polymerase II-specific"/>
    <property type="evidence" value="ECO:0007669"/>
    <property type="project" value="InterPro"/>
</dbReference>
<dbReference type="GO" id="GO:0000977">
    <property type="term" value="F:RNA polymerase II transcription regulatory region sequence-specific DNA binding"/>
    <property type="evidence" value="ECO:0000318"/>
    <property type="project" value="GO_Central"/>
</dbReference>
<dbReference type="GO" id="GO:0008270">
    <property type="term" value="F:zinc ion binding"/>
    <property type="evidence" value="ECO:0007669"/>
    <property type="project" value="InterPro"/>
</dbReference>
<dbReference type="GO" id="GO:0009267">
    <property type="term" value="P:cellular response to starvation"/>
    <property type="evidence" value="ECO:0000318"/>
    <property type="project" value="GO_Central"/>
</dbReference>
<dbReference type="CDD" id="cd00067">
    <property type="entry name" value="GAL4"/>
    <property type="match status" value="1"/>
</dbReference>
<dbReference type="Gene3D" id="4.10.240.10">
    <property type="entry name" value="Zn(2)-C6 fungal-type DNA-binding domain"/>
    <property type="match status" value="1"/>
</dbReference>
<dbReference type="InterPro" id="IPR050335">
    <property type="entry name" value="ERT1_acuK_gluconeogen_tf"/>
</dbReference>
<dbReference type="InterPro" id="IPR000014">
    <property type="entry name" value="PAS"/>
</dbReference>
<dbReference type="InterPro" id="IPR056751">
    <property type="entry name" value="PAS_13"/>
</dbReference>
<dbReference type="InterPro" id="IPR036864">
    <property type="entry name" value="Zn2-C6_fun-type_DNA-bd_sf"/>
</dbReference>
<dbReference type="InterPro" id="IPR001138">
    <property type="entry name" value="Zn2Cys6_DnaBD"/>
</dbReference>
<dbReference type="PANTHER" id="PTHR47659:SF8">
    <property type="entry name" value="GLUCOSE STARVATION MODULATOR PROTEIN 1"/>
    <property type="match status" value="1"/>
</dbReference>
<dbReference type="PANTHER" id="PTHR47659">
    <property type="entry name" value="ZN(II)2CYS6 TRANSCRIPTION FACTOR (EUROFUNG)-RELATED"/>
    <property type="match status" value="1"/>
</dbReference>
<dbReference type="Pfam" id="PF24990">
    <property type="entry name" value="PAS_13"/>
    <property type="match status" value="2"/>
</dbReference>
<dbReference type="Pfam" id="PF00172">
    <property type="entry name" value="Zn_clus"/>
    <property type="match status" value="1"/>
</dbReference>
<dbReference type="SMART" id="SM00066">
    <property type="entry name" value="GAL4"/>
    <property type="match status" value="1"/>
</dbReference>
<dbReference type="SUPFAM" id="SSF57701">
    <property type="entry name" value="Zn2/Cys6 DNA-binding domain"/>
    <property type="match status" value="1"/>
</dbReference>
<dbReference type="PROSITE" id="PS50112">
    <property type="entry name" value="PAS"/>
    <property type="match status" value="1"/>
</dbReference>
<dbReference type="PROSITE" id="PS00463">
    <property type="entry name" value="ZN2_CY6_FUNGAL_1"/>
    <property type="match status" value="1"/>
</dbReference>
<dbReference type="PROSITE" id="PS50048">
    <property type="entry name" value="ZN2_CY6_FUNGAL_2"/>
    <property type="match status" value="1"/>
</dbReference>
<reference key="1">
    <citation type="journal article" date="2004" name="Science">
        <title>The Ashbya gossypii genome as a tool for mapping the ancient Saccharomyces cerevisiae genome.</title>
        <authorList>
            <person name="Dietrich F.S."/>
            <person name="Voegeli S."/>
            <person name="Brachat S."/>
            <person name="Lerch A."/>
            <person name="Gates K."/>
            <person name="Steiner S."/>
            <person name="Mohr C."/>
            <person name="Poehlmann R."/>
            <person name="Luedi P."/>
            <person name="Choi S."/>
            <person name="Wing R.A."/>
            <person name="Flavier A."/>
            <person name="Gaffney T.D."/>
            <person name="Philippsen P."/>
        </authorList>
    </citation>
    <scope>NUCLEOTIDE SEQUENCE [LARGE SCALE GENOMIC DNA]</scope>
    <source>
        <strain>ATCC 10895 / CBS 109.51 / FGSC 9923 / NRRL Y-1056</strain>
    </source>
</reference>
<reference key="2">
    <citation type="journal article" date="2013" name="G3 (Bethesda)">
        <title>Genomes of Ashbya fungi isolated from insects reveal four mating-type loci, numerous translocations, lack of transposons, and distinct gene duplications.</title>
        <authorList>
            <person name="Dietrich F.S."/>
            <person name="Voegeli S."/>
            <person name="Kuo S."/>
            <person name="Philippsen P."/>
        </authorList>
    </citation>
    <scope>GENOME REANNOTATION</scope>
    <source>
        <strain>ATCC 10895 / CBS 109.51 / FGSC 9923 / NRRL Y-1056</strain>
    </source>
</reference>
<proteinExistence type="inferred from homology"/>
<keyword id="KW-0238">DNA-binding</keyword>
<keyword id="KW-0479">Metal-binding</keyword>
<keyword id="KW-0539">Nucleus</keyword>
<keyword id="KW-1185">Reference proteome</keyword>
<keyword id="KW-0804">Transcription</keyword>
<keyword id="KW-0805">Transcription regulation</keyword>
<keyword id="KW-0862">Zinc</keyword>
<protein>
    <recommendedName>
        <fullName>Glucose starvation modulator protein 1</fullName>
    </recommendedName>
</protein>